<evidence type="ECO:0000250" key="1"/>
<evidence type="ECO:0000255" key="2"/>
<evidence type="ECO:0000255" key="3">
    <source>
        <dbReference type="PROSITE-ProRule" id="PRU00079"/>
    </source>
</evidence>
<evidence type="ECO:0000255" key="4">
    <source>
        <dbReference type="PROSITE-ProRule" id="PRU00597"/>
    </source>
</evidence>
<evidence type="ECO:0000255" key="5">
    <source>
        <dbReference type="PROSITE-ProRule" id="PRU10069"/>
    </source>
</evidence>
<evidence type="ECO:0000256" key="6">
    <source>
        <dbReference type="SAM" id="MobiDB-lite"/>
    </source>
</evidence>
<evidence type="ECO:0000305" key="7"/>
<organism>
    <name type="scientific">Hypocrea jecorina</name>
    <name type="common">Trichoderma reesei</name>
    <dbReference type="NCBI Taxonomy" id="51453"/>
    <lineage>
        <taxon>Eukaryota</taxon>
        <taxon>Fungi</taxon>
        <taxon>Dikarya</taxon>
        <taxon>Ascomycota</taxon>
        <taxon>Pezizomycotina</taxon>
        <taxon>Sordariomycetes</taxon>
        <taxon>Hypocreomycetidae</taxon>
        <taxon>Hypocreales</taxon>
        <taxon>Hypocreaceae</taxon>
        <taxon>Trichoderma</taxon>
    </lineage>
</organism>
<accession>P43317</accession>
<gene>
    <name type="primary">egl5</name>
</gene>
<comment type="catalytic activity">
    <reaction>
        <text>Endohydrolysis of (1-&gt;4)-beta-D-glucosidic linkages in cellulose, lichenin and cereal beta-D-glucans.</text>
        <dbReference type="EC" id="3.2.1.4"/>
    </reaction>
</comment>
<comment type="similarity">
    <text evidence="7">Belongs to the glycosyl hydrolase 45 (cellulase K) family.</text>
</comment>
<keyword id="KW-0119">Carbohydrate metabolism</keyword>
<keyword id="KW-0136">Cellulose degradation</keyword>
<keyword id="KW-1015">Disulfide bond</keyword>
<keyword id="KW-0325">Glycoprotein</keyword>
<keyword id="KW-0326">Glycosidase</keyword>
<keyword id="KW-0378">Hydrolase</keyword>
<keyword id="KW-0624">Polysaccharide degradation</keyword>
<keyword id="KW-0732">Signal</keyword>
<name>GUN5_HYPJE</name>
<sequence>MKATLVLGSLIVGAVSAYKATTTRYYDGQEGACGCGSSSGAFPWQLGIGNGVYTAAGSQALFDTAGASWCGAGCGKCYQLTSTGQAPCSSCGTGGAAGQSIIVMVTNLCPNNGNAQWCPVVGGTNQYGYSYHFDIMAQNEIFGDNVVVDFEPIACPGQAASDWGTCLCVGQQETDPTPVLGNDTGSTPPGSSPPATSSSPPSGGGQQTLYGQCGGAGWTGPTTCQAPGTCKVQNQWYSQCLP</sequence>
<feature type="signal peptide" evidence="2">
    <location>
        <begin position="1"/>
        <end position="17"/>
    </location>
</feature>
<feature type="chain" id="PRO_0000008022" description="Endoglucanase-5">
    <location>
        <begin position="18"/>
        <end position="242"/>
    </location>
</feature>
<feature type="domain" description="CBM1" evidence="4">
    <location>
        <begin position="205"/>
        <end position="241"/>
    </location>
</feature>
<feature type="region of interest" description="Catalytic">
    <location>
        <begin position="18"/>
        <end position="182"/>
    </location>
</feature>
<feature type="region of interest" description="Disordered" evidence="6">
    <location>
        <begin position="177"/>
        <end position="206"/>
    </location>
</feature>
<feature type="compositionally biased region" description="Low complexity" evidence="6">
    <location>
        <begin position="184"/>
        <end position="201"/>
    </location>
</feature>
<feature type="active site" description="Nucleophile" evidence="5">
    <location>
        <position position="27"/>
    </location>
</feature>
<feature type="active site" description="Proton donor" evidence="1">
    <location>
        <position position="134"/>
    </location>
</feature>
<feature type="glycosylation site" description="N-linked (GlcNAc...) asparagine" evidence="2">
    <location>
        <position position="182"/>
    </location>
</feature>
<feature type="disulfide bond" evidence="3">
    <location>
        <begin position="213"/>
        <end position="230"/>
    </location>
</feature>
<feature type="disulfide bond" evidence="3">
    <location>
        <begin position="224"/>
        <end position="240"/>
    </location>
</feature>
<reference key="1">
    <citation type="journal article" date="1994" name="Mol. Microbiol.">
        <title>A novel, small endoglucanase gene, egl5, from Trichoderma reesei isolated by expression in yeast.</title>
        <authorList>
            <person name="Saloheimo A."/>
            <person name="Henrissat B."/>
            <person name="Hoffren A.-M."/>
            <person name="Teleman O."/>
            <person name="Penttilae M."/>
        </authorList>
    </citation>
    <scope>NUCLEOTIDE SEQUENCE [GENOMIC DNA]</scope>
    <source>
        <strain>ATCC 26921 / CBS 392.92 / QM9414</strain>
    </source>
</reference>
<protein>
    <recommendedName>
        <fullName>Endoglucanase-5</fullName>
        <ecNumber>3.2.1.4</ecNumber>
    </recommendedName>
    <alternativeName>
        <fullName>Cellulase V</fullName>
    </alternativeName>
    <alternativeName>
        <fullName>Endo-1,4-beta-glucanase V</fullName>
        <shortName>EG V</shortName>
    </alternativeName>
    <alternativeName>
        <fullName>Endoglucanase V</fullName>
    </alternativeName>
</protein>
<proteinExistence type="inferred from homology"/>
<dbReference type="EC" id="3.2.1.4"/>
<dbReference type="EMBL" id="Z33381">
    <property type="protein sequence ID" value="CAA83846.1"/>
    <property type="molecule type" value="Genomic_DNA"/>
</dbReference>
<dbReference type="PIR" id="S60143">
    <property type="entry name" value="S60143"/>
</dbReference>
<dbReference type="SMR" id="P43317"/>
<dbReference type="CAZy" id="CBM1">
    <property type="family name" value="Carbohydrate-Binding Module Family 1"/>
</dbReference>
<dbReference type="CAZy" id="GH45">
    <property type="family name" value="Glycoside Hydrolase Family 45"/>
</dbReference>
<dbReference type="GlyCosmos" id="P43317">
    <property type="glycosylation" value="1 site, No reported glycans"/>
</dbReference>
<dbReference type="VEuPathDB" id="FungiDB:TrQ_008031"/>
<dbReference type="OMA" id="MAQNEIF"/>
<dbReference type="BioCyc" id="MetaCyc:MONOMER-16505"/>
<dbReference type="GO" id="GO:0005576">
    <property type="term" value="C:extracellular region"/>
    <property type="evidence" value="ECO:0007669"/>
    <property type="project" value="InterPro"/>
</dbReference>
<dbReference type="GO" id="GO:0008810">
    <property type="term" value="F:cellulase activity"/>
    <property type="evidence" value="ECO:0007669"/>
    <property type="project" value="UniProtKB-EC"/>
</dbReference>
<dbReference type="GO" id="GO:0030248">
    <property type="term" value="F:cellulose binding"/>
    <property type="evidence" value="ECO:0007669"/>
    <property type="project" value="InterPro"/>
</dbReference>
<dbReference type="GO" id="GO:0030245">
    <property type="term" value="P:cellulose catabolic process"/>
    <property type="evidence" value="ECO:0007669"/>
    <property type="project" value="UniProtKB-KW"/>
</dbReference>
<dbReference type="CDD" id="cd22278">
    <property type="entry name" value="DPBB_GH45_endoglucanase"/>
    <property type="match status" value="1"/>
</dbReference>
<dbReference type="Gene3D" id="2.40.40.10">
    <property type="entry name" value="RlpA-like domain"/>
    <property type="match status" value="1"/>
</dbReference>
<dbReference type="InterPro" id="IPR035971">
    <property type="entry name" value="CBD_sf"/>
</dbReference>
<dbReference type="InterPro" id="IPR000254">
    <property type="entry name" value="Cellulose-bd_dom_fun"/>
</dbReference>
<dbReference type="InterPro" id="IPR007112">
    <property type="entry name" value="Expansin/allergen_DPBB_dom"/>
</dbReference>
<dbReference type="InterPro" id="IPR000334">
    <property type="entry name" value="Glyco_hydro_45"/>
</dbReference>
<dbReference type="InterPro" id="IPR036908">
    <property type="entry name" value="RlpA-like_sf"/>
</dbReference>
<dbReference type="Pfam" id="PF00734">
    <property type="entry name" value="CBM_1"/>
    <property type="match status" value="1"/>
</dbReference>
<dbReference type="Pfam" id="PF22514">
    <property type="entry name" value="EXPB1_D1"/>
    <property type="match status" value="1"/>
</dbReference>
<dbReference type="SMART" id="SM00236">
    <property type="entry name" value="fCBD"/>
    <property type="match status" value="1"/>
</dbReference>
<dbReference type="SUPFAM" id="SSF50685">
    <property type="entry name" value="Barwin-like endoglucanases"/>
    <property type="match status" value="1"/>
</dbReference>
<dbReference type="SUPFAM" id="SSF57180">
    <property type="entry name" value="Cellulose-binding domain"/>
    <property type="match status" value="1"/>
</dbReference>
<dbReference type="PROSITE" id="PS00562">
    <property type="entry name" value="CBM1_1"/>
    <property type="match status" value="1"/>
</dbReference>
<dbReference type="PROSITE" id="PS51164">
    <property type="entry name" value="CBM1_2"/>
    <property type="match status" value="1"/>
</dbReference>
<dbReference type="PROSITE" id="PS50842">
    <property type="entry name" value="EXPANSIN_EG45"/>
    <property type="match status" value="1"/>
</dbReference>
<dbReference type="PROSITE" id="PS01140">
    <property type="entry name" value="GLYCOSYL_HYDROL_F45"/>
    <property type="match status" value="1"/>
</dbReference>